<name>YR694_MIMIV</name>
<evidence type="ECO:0000255" key="1"/>
<evidence type="ECO:0000305" key="2"/>
<accession>Q5UNU8</accession>
<organismHost>
    <name type="scientific">Acanthamoeba polyphaga</name>
    <name type="common">Amoeba</name>
    <dbReference type="NCBI Taxonomy" id="5757"/>
</organismHost>
<gene>
    <name type="ordered locus">MIMI_R694</name>
</gene>
<comment type="subcellular location">
    <subcellularLocation>
        <location evidence="2">Membrane</location>
        <topology evidence="2">Multi-pass membrane protein</topology>
    </subcellularLocation>
</comment>
<proteinExistence type="predicted"/>
<organism>
    <name type="scientific">Acanthamoeba polyphaga mimivirus</name>
    <name type="common">APMV</name>
    <dbReference type="NCBI Taxonomy" id="212035"/>
    <lineage>
        <taxon>Viruses</taxon>
        <taxon>Varidnaviria</taxon>
        <taxon>Bamfordvirae</taxon>
        <taxon>Nucleocytoviricota</taxon>
        <taxon>Megaviricetes</taxon>
        <taxon>Imitervirales</taxon>
        <taxon>Mimiviridae</taxon>
        <taxon>Megamimivirinae</taxon>
        <taxon>Mimivirus</taxon>
        <taxon>Mimivirus bradfordmassiliense</taxon>
    </lineage>
</organism>
<reference key="1">
    <citation type="journal article" date="2004" name="Science">
        <title>The 1.2-megabase genome sequence of Mimivirus.</title>
        <authorList>
            <person name="Raoult D."/>
            <person name="Audic S."/>
            <person name="Robert C."/>
            <person name="Abergel C."/>
            <person name="Renesto P."/>
            <person name="Ogata H."/>
            <person name="La Scola B."/>
            <person name="Susan M."/>
            <person name="Claverie J.-M."/>
        </authorList>
    </citation>
    <scope>NUCLEOTIDE SEQUENCE [LARGE SCALE GENOMIC DNA]</scope>
    <source>
        <strain>Rowbotham-Bradford</strain>
    </source>
</reference>
<keyword id="KW-0472">Membrane</keyword>
<keyword id="KW-1185">Reference proteome</keyword>
<keyword id="KW-0812">Transmembrane</keyword>
<keyword id="KW-1133">Transmembrane helix</keyword>
<sequence>MSHFSRCFDECSKIERPNVNKKLTRLIIVLFCLLCIIVTLGVIGYKFLFKMSYVDAIYNTAITTSTLGIAPGDKTDAEKIFTGIYAVLVGVFFISVISAIVSYMFTTYILD</sequence>
<protein>
    <recommendedName>
        <fullName>Uncharacterized protein R694</fullName>
    </recommendedName>
</protein>
<dbReference type="EMBL" id="AY653733">
    <property type="protein sequence ID" value="AAV50955.1"/>
    <property type="molecule type" value="Genomic_DNA"/>
</dbReference>
<dbReference type="SMR" id="Q5UNU8"/>
<dbReference type="KEGG" id="vg:9925346"/>
<dbReference type="OrthoDB" id="38036at10239"/>
<dbReference type="Proteomes" id="UP000001134">
    <property type="component" value="Genome"/>
</dbReference>
<dbReference type="GO" id="GO:0016020">
    <property type="term" value="C:membrane"/>
    <property type="evidence" value="ECO:0007669"/>
    <property type="project" value="UniProtKB-SubCell"/>
</dbReference>
<dbReference type="Gene3D" id="1.10.287.70">
    <property type="match status" value="1"/>
</dbReference>
<dbReference type="InterPro" id="IPR013099">
    <property type="entry name" value="K_chnl_dom"/>
</dbReference>
<dbReference type="Pfam" id="PF07885">
    <property type="entry name" value="Ion_trans_2"/>
    <property type="match status" value="1"/>
</dbReference>
<dbReference type="SUPFAM" id="SSF81324">
    <property type="entry name" value="Voltage-gated potassium channels"/>
    <property type="match status" value="1"/>
</dbReference>
<feature type="chain" id="PRO_0000071323" description="Uncharacterized protein R694">
    <location>
        <begin position="1"/>
        <end position="111"/>
    </location>
</feature>
<feature type="transmembrane region" description="Helical" evidence="1">
    <location>
        <begin position="27"/>
        <end position="47"/>
    </location>
</feature>
<feature type="transmembrane region" description="Helical" evidence="1">
    <location>
        <begin position="80"/>
        <end position="100"/>
    </location>
</feature>